<comment type="subcellular location">
    <subcellularLocation>
        <location evidence="1">Cell membrane</location>
        <topology evidence="1">Multi-pass membrane protein</topology>
    </subcellularLocation>
</comment>
<comment type="similarity">
    <text evidence="1">Belongs to the UPF0316 family.</text>
</comment>
<protein>
    <recommendedName>
        <fullName evidence="1">UPF0316 protein MW1852</fullName>
    </recommendedName>
</protein>
<organism>
    <name type="scientific">Staphylococcus aureus (strain MW2)</name>
    <dbReference type="NCBI Taxonomy" id="196620"/>
    <lineage>
        <taxon>Bacteria</taxon>
        <taxon>Bacillati</taxon>
        <taxon>Bacillota</taxon>
        <taxon>Bacilli</taxon>
        <taxon>Bacillales</taxon>
        <taxon>Staphylococcaceae</taxon>
        <taxon>Staphylococcus</taxon>
    </lineage>
</organism>
<reference key="1">
    <citation type="journal article" date="2002" name="Lancet">
        <title>Genome and virulence determinants of high virulence community-acquired MRSA.</title>
        <authorList>
            <person name="Baba T."/>
            <person name="Takeuchi F."/>
            <person name="Kuroda M."/>
            <person name="Yuzawa H."/>
            <person name="Aoki K."/>
            <person name="Oguchi A."/>
            <person name="Nagai Y."/>
            <person name="Iwama N."/>
            <person name="Asano K."/>
            <person name="Naimi T."/>
            <person name="Kuroda H."/>
            <person name="Cui L."/>
            <person name="Yamamoto K."/>
            <person name="Hiramatsu K."/>
        </authorList>
    </citation>
    <scope>NUCLEOTIDE SEQUENCE [LARGE SCALE GENOMIC DNA]</scope>
    <source>
        <strain>MW2</strain>
    </source>
</reference>
<dbReference type="EMBL" id="BA000033">
    <property type="protein sequence ID" value="BAB95717.1"/>
    <property type="molecule type" value="Genomic_DNA"/>
</dbReference>
<dbReference type="RefSeq" id="WP_000011542.1">
    <property type="nucleotide sequence ID" value="NC_003923.1"/>
</dbReference>
<dbReference type="SMR" id="P61545"/>
<dbReference type="KEGG" id="sam:MW1852"/>
<dbReference type="HOGENOM" id="CLU_106166_1_0_9"/>
<dbReference type="GO" id="GO:0005886">
    <property type="term" value="C:plasma membrane"/>
    <property type="evidence" value="ECO:0007669"/>
    <property type="project" value="UniProtKB-SubCell"/>
</dbReference>
<dbReference type="CDD" id="cd16381">
    <property type="entry name" value="YitT_C_like_1"/>
    <property type="match status" value="1"/>
</dbReference>
<dbReference type="HAMAP" id="MF_01515">
    <property type="entry name" value="UPF0316"/>
    <property type="match status" value="1"/>
</dbReference>
<dbReference type="InterPro" id="IPR019264">
    <property type="entry name" value="DUF2179"/>
</dbReference>
<dbReference type="InterPro" id="IPR044035">
    <property type="entry name" value="DUF5698"/>
</dbReference>
<dbReference type="InterPro" id="IPR022930">
    <property type="entry name" value="UPF0316"/>
</dbReference>
<dbReference type="NCBIfam" id="NF003190">
    <property type="entry name" value="PRK04164.1-1"/>
    <property type="match status" value="1"/>
</dbReference>
<dbReference type="NCBIfam" id="NF003194">
    <property type="entry name" value="PRK04164.1-5"/>
    <property type="match status" value="1"/>
</dbReference>
<dbReference type="PANTHER" id="PTHR40060">
    <property type="entry name" value="UPF0316 PROTEIN YEBE"/>
    <property type="match status" value="1"/>
</dbReference>
<dbReference type="PANTHER" id="PTHR40060:SF1">
    <property type="entry name" value="UPF0316 PROTEIN YEBE"/>
    <property type="match status" value="1"/>
</dbReference>
<dbReference type="Pfam" id="PF10035">
    <property type="entry name" value="DUF2179"/>
    <property type="match status" value="1"/>
</dbReference>
<dbReference type="Pfam" id="PF18955">
    <property type="entry name" value="DUF5698"/>
    <property type="match status" value="1"/>
</dbReference>
<name>Y1852_STAAW</name>
<feature type="chain" id="PRO_0000171955" description="UPF0316 protein MW1852">
    <location>
        <begin position="1"/>
        <end position="200"/>
    </location>
</feature>
<feature type="transmembrane region" description="Helical" evidence="1">
    <location>
        <begin position="8"/>
        <end position="28"/>
    </location>
</feature>
<feature type="transmembrane region" description="Helical" evidence="1">
    <location>
        <begin position="40"/>
        <end position="60"/>
    </location>
</feature>
<feature type="transmembrane region" description="Helical" evidence="1">
    <location>
        <begin position="66"/>
        <end position="86"/>
    </location>
</feature>
<evidence type="ECO:0000255" key="1">
    <source>
        <dbReference type="HAMAP-Rule" id="MF_01515"/>
    </source>
</evidence>
<proteinExistence type="inferred from homology"/>
<sequence length="200" mass="22955">MSFVTENPWLMVLTIFIINVCYVTFLTMRTILTLKGYRYIAASVSFLEVLVYIVGLGLVMSNLDHIQNIIAYAFGFSIGIIVGMKIEEKLALGYTVVNVTSAEYELDLPNELRNLGYGVTHYAAFGRDGSRMVMQILTPRKYERKLMDTIKNLDPKAFIIAYEPRNIHGGFWTKGIRRRKLKDYEPEELESVVEHEIQSK</sequence>
<keyword id="KW-1003">Cell membrane</keyword>
<keyword id="KW-0472">Membrane</keyword>
<keyword id="KW-0812">Transmembrane</keyword>
<keyword id="KW-1133">Transmembrane helix</keyword>
<gene>
    <name type="ordered locus">MW1852</name>
</gene>
<accession>P61545</accession>
<accession>Q99SX6</accession>